<gene>
    <name evidence="1" type="primary">KRR1</name>
    <name type="ORF">SCRG_05350</name>
</gene>
<proteinExistence type="inferred from homology"/>
<name>KRR1_YEAS1</name>
<accession>B3LU25</accession>
<keyword id="KW-0539">Nucleus</keyword>
<keyword id="KW-0687">Ribonucleoprotein</keyword>
<keyword id="KW-0690">Ribosome biogenesis</keyword>
<keyword id="KW-0694">RNA-binding</keyword>
<keyword id="KW-0698">rRNA processing</keyword>
<protein>
    <recommendedName>
        <fullName evidence="1">KRR1 small subunit processome component</fullName>
    </recommendedName>
    <alternativeName>
        <fullName evidence="1">KRR-R motif-containing protein 1</fullName>
    </alternativeName>
    <alternativeName>
        <fullName evidence="1">Ribosomal RNA assembly protein KRR1</fullName>
    </alternativeName>
</protein>
<dbReference type="EMBL" id="CH408056">
    <property type="protein sequence ID" value="EDV09656.1"/>
    <property type="molecule type" value="Genomic_DNA"/>
</dbReference>
<dbReference type="EMDB" id="EMD-8859"/>
<dbReference type="SMR" id="B3LU25"/>
<dbReference type="HOGENOM" id="CLU_040185_0_2_1"/>
<dbReference type="OrthoDB" id="26728at4893"/>
<dbReference type="Proteomes" id="UP000008335">
    <property type="component" value="Unassembled WGS sequence"/>
</dbReference>
<dbReference type="GO" id="GO:0005730">
    <property type="term" value="C:nucleolus"/>
    <property type="evidence" value="ECO:0007669"/>
    <property type="project" value="UniProtKB-SubCell"/>
</dbReference>
<dbReference type="GO" id="GO:0032040">
    <property type="term" value="C:small-subunit processome"/>
    <property type="evidence" value="ECO:0007669"/>
    <property type="project" value="TreeGrafter"/>
</dbReference>
<dbReference type="GO" id="GO:0003723">
    <property type="term" value="F:RNA binding"/>
    <property type="evidence" value="ECO:0007669"/>
    <property type="project" value="UniProtKB-KW"/>
</dbReference>
<dbReference type="GO" id="GO:0006364">
    <property type="term" value="P:rRNA processing"/>
    <property type="evidence" value="ECO:0007669"/>
    <property type="project" value="UniProtKB-KW"/>
</dbReference>
<dbReference type="CDD" id="cd22393">
    <property type="entry name" value="KH-I_KRR1_rpt1"/>
    <property type="match status" value="1"/>
</dbReference>
<dbReference type="CDD" id="cd22394">
    <property type="entry name" value="KH-I_KRR1_rpt2"/>
    <property type="match status" value="1"/>
</dbReference>
<dbReference type="FunFam" id="3.30.1370.10:FF:000011">
    <property type="entry name" value="KRR1 small subunit processome component"/>
    <property type="match status" value="1"/>
</dbReference>
<dbReference type="FunFam" id="3.30.1370.10:FF:000014">
    <property type="entry name" value="KRR1 small subunit processome component"/>
    <property type="match status" value="1"/>
</dbReference>
<dbReference type="Gene3D" id="3.30.1370.10">
    <property type="entry name" value="K Homology domain, type 1"/>
    <property type="match status" value="2"/>
</dbReference>
<dbReference type="InterPro" id="IPR004087">
    <property type="entry name" value="KH_dom"/>
</dbReference>
<dbReference type="InterPro" id="IPR036612">
    <property type="entry name" value="KH_dom_type_1_sf"/>
</dbReference>
<dbReference type="InterPro" id="IPR041174">
    <property type="entry name" value="KRR1-like_KH1"/>
</dbReference>
<dbReference type="InterPro" id="IPR048550">
    <property type="entry name" value="KRR1-like_KH1_euk"/>
</dbReference>
<dbReference type="InterPro" id="IPR048548">
    <property type="entry name" value="KRR1-like_KH2"/>
</dbReference>
<dbReference type="InterPro" id="IPR048549">
    <property type="entry name" value="KRR1-like_KH2_euk"/>
</dbReference>
<dbReference type="InterPro" id="IPR024166">
    <property type="entry name" value="rRNA_assembly_KRR1"/>
</dbReference>
<dbReference type="PANTHER" id="PTHR12581">
    <property type="entry name" value="HIV-1 REV BINDING PROTEIN 2, 3"/>
    <property type="match status" value="1"/>
</dbReference>
<dbReference type="PANTHER" id="PTHR12581:SF0">
    <property type="entry name" value="KRR1 SMALL SUBUNIT PROCESSOME COMPONENT HOMOLOG"/>
    <property type="match status" value="1"/>
</dbReference>
<dbReference type="Pfam" id="PF17903">
    <property type="entry name" value="KH_KRR1_1st"/>
    <property type="match status" value="1"/>
</dbReference>
<dbReference type="Pfam" id="PF21800">
    <property type="entry name" value="KH_KRR1_2nd"/>
    <property type="match status" value="1"/>
</dbReference>
<dbReference type="PIRSF" id="PIRSF006515">
    <property type="entry name" value="KRR1"/>
    <property type="match status" value="1"/>
</dbReference>
<dbReference type="SMART" id="SM00322">
    <property type="entry name" value="KH"/>
    <property type="match status" value="1"/>
</dbReference>
<dbReference type="SUPFAM" id="SSF54791">
    <property type="entry name" value="Eukaryotic type KH-domain (KH-domain type I)"/>
    <property type="match status" value="1"/>
</dbReference>
<reference evidence="4" key="1">
    <citation type="submission" date="2005-03" db="EMBL/GenBank/DDBJ databases">
        <title>Annotation of the Saccharomyces cerevisiae RM11-1a genome.</title>
        <authorList>
            <consortium name="The Broad Institute Genome Sequencing Platform"/>
            <person name="Birren B.W."/>
            <person name="Lander E.S."/>
            <person name="Galagan J.E."/>
            <person name="Nusbaum C."/>
            <person name="Devon K."/>
            <person name="Cuomo C."/>
            <person name="Jaffe D.B."/>
            <person name="Butler J."/>
            <person name="Alvarez P."/>
            <person name="Gnerre S."/>
            <person name="Grabherr M."/>
            <person name="Kleber M."/>
            <person name="Mauceli E.W."/>
            <person name="Brockman W."/>
            <person name="MacCallum I.A."/>
            <person name="Rounsley S."/>
            <person name="Young S.K."/>
            <person name="LaButti K."/>
            <person name="Pushparaj V."/>
            <person name="DeCaprio D."/>
            <person name="Crawford M."/>
            <person name="Koehrsen M."/>
            <person name="Engels R."/>
            <person name="Montgomery P."/>
            <person name="Pearson M."/>
            <person name="Howarth C."/>
            <person name="Larson L."/>
            <person name="Luoma S."/>
            <person name="White J."/>
            <person name="O'Leary S."/>
            <person name="Kodira C.D."/>
            <person name="Zeng Q."/>
            <person name="Yandava C."/>
            <person name="Alvarado L."/>
            <person name="Pratt S."/>
            <person name="Kruglyak L."/>
        </authorList>
    </citation>
    <scope>NUCLEOTIDE SEQUENCE [LARGE SCALE GENOMIC DNA]</scope>
    <source>
        <strain evidence="4">RM11-1a</strain>
    </source>
</reference>
<comment type="function">
    <text evidence="1">Required for 40S ribosome biogenesis. Involved in nucleolar processing of pre-18S ribosomal RNA and ribosome assembly. Essential for vegetative growth (By similarity).</text>
</comment>
<comment type="subunit">
    <text evidence="1">Component of the ribosomal small subunit (SSU) processome composed of at least 40 protein subunits and snoRNA U3. Interacts with snoRNA U3. Interacts with MPP10, KRI1 and with ribosomal proteins RPS1A, RPS4A, RPS4B, RPS8A, RPS8B, RPS11A, RPS11B, RPS13, RPS24, RPS25, RPL4A, RPL7B, RPL8, RPL23, RPL25 and RPL28 (By similarity).</text>
</comment>
<comment type="subcellular location">
    <subcellularLocation>
        <location evidence="1">Nucleus</location>
        <location evidence="1">Nucleolus</location>
    </subcellularLocation>
</comment>
<comment type="similarity">
    <text evidence="2">Belongs to the KRR1 family.</text>
</comment>
<evidence type="ECO:0000250" key="1">
    <source>
        <dbReference type="UniProtKB" id="P25586"/>
    </source>
</evidence>
<evidence type="ECO:0000255" key="2"/>
<evidence type="ECO:0000256" key="3">
    <source>
        <dbReference type="SAM" id="MobiDB-lite"/>
    </source>
</evidence>
<evidence type="ECO:0000312" key="4">
    <source>
        <dbReference type="EMBL" id="EDV09656.1"/>
    </source>
</evidence>
<feature type="chain" id="PRO_0000415661" description="KRR1 small subunit processome component">
    <location>
        <begin position="1"/>
        <end position="316"/>
    </location>
</feature>
<feature type="domain" description="KH" evidence="2">
    <location>
        <begin position="122"/>
        <end position="192"/>
    </location>
</feature>
<feature type="region of interest" description="Disordered" evidence="3">
    <location>
        <begin position="279"/>
        <end position="316"/>
    </location>
</feature>
<feature type="compositionally biased region" description="Basic and acidic residues" evidence="3">
    <location>
        <begin position="279"/>
        <end position="304"/>
    </location>
</feature>
<sequence length="316" mass="37159">MVSTHNRDKPWDTDDIDKWKIEEFKEEDNASGQPFAEESSFMTLFPKYRESYLKTIWNDVTRALDKHNIACVLDLVEGSMTVKTTRKTYDPAIILKARDLIKLLARSVPFPQAVKILQDDMACDVIKIGNFVTNKERFVKRRQRLVGPNGNTLKALELLTKCYILVQGNTVSAMGPFKGLKEVRRVVEDCMKNIHPIYHIKELMIKRELAKRPELANEDWSRFLPMFKKRNVARKKPKKIRNVEKKVYTPFPPAQLPRKVDLEIESGEYFLSKREKQMKKLNEQKEKQMEREIERQEERAKDFIAPEEEAYKPNQN</sequence>
<organism>
    <name type="scientific">Saccharomyces cerevisiae (strain RM11-1a)</name>
    <name type="common">Baker's yeast</name>
    <dbReference type="NCBI Taxonomy" id="285006"/>
    <lineage>
        <taxon>Eukaryota</taxon>
        <taxon>Fungi</taxon>
        <taxon>Dikarya</taxon>
        <taxon>Ascomycota</taxon>
        <taxon>Saccharomycotina</taxon>
        <taxon>Saccharomycetes</taxon>
        <taxon>Saccharomycetales</taxon>
        <taxon>Saccharomycetaceae</taxon>
        <taxon>Saccharomyces</taxon>
    </lineage>
</organism>